<accession>P33301</accession>
<accession>D6VT00</accession>
<dbReference type="EMBL" id="L22856">
    <property type="protein sequence ID" value="AAA35220.1"/>
    <property type="molecule type" value="Genomic_DNA"/>
</dbReference>
<dbReference type="EMBL" id="U28373">
    <property type="protein sequence ID" value="AAB64805.1"/>
    <property type="molecule type" value="Genomic_DNA"/>
</dbReference>
<dbReference type="EMBL" id="X80642">
    <property type="protein sequence ID" value="CAA56687.1"/>
    <property type="molecule type" value="Genomic_DNA"/>
</dbReference>
<dbReference type="EMBL" id="BK006938">
    <property type="protein sequence ID" value="DAA12210.1"/>
    <property type="molecule type" value="Genomic_DNA"/>
</dbReference>
<dbReference type="PIR" id="S61164">
    <property type="entry name" value="S61164"/>
</dbReference>
<dbReference type="RefSeq" id="NP_010657.3">
    <property type="nucleotide sequence ID" value="NM_001180677.3"/>
</dbReference>
<dbReference type="BioGRID" id="32428">
    <property type="interactions" value="380"/>
</dbReference>
<dbReference type="ComplexPortal" id="CPX-1872">
    <property type="entry name" value="MRX double-strand break repair complex"/>
</dbReference>
<dbReference type="DIP" id="DIP-2420N"/>
<dbReference type="FunCoup" id="P33301">
    <property type="interactions" value="201"/>
</dbReference>
<dbReference type="IntAct" id="P33301">
    <property type="interactions" value="18"/>
</dbReference>
<dbReference type="MINT" id="P33301"/>
<dbReference type="STRING" id="4932.YDR369C"/>
<dbReference type="iPTMnet" id="P33301"/>
<dbReference type="PaxDb" id="4932-YDR369C"/>
<dbReference type="PeptideAtlas" id="P33301"/>
<dbReference type="EnsemblFungi" id="YDR369C_mRNA">
    <property type="protein sequence ID" value="YDR369C"/>
    <property type="gene ID" value="YDR369C"/>
</dbReference>
<dbReference type="GeneID" id="851975"/>
<dbReference type="KEGG" id="sce:YDR369C"/>
<dbReference type="AGR" id="SGD:S000002777"/>
<dbReference type="SGD" id="S000002777">
    <property type="gene designation" value="XRS2"/>
</dbReference>
<dbReference type="VEuPathDB" id="FungiDB:YDR369C"/>
<dbReference type="eggNOG" id="ENOG502QU0B">
    <property type="taxonomic scope" value="Eukaryota"/>
</dbReference>
<dbReference type="HOGENOM" id="CLU_017587_0_0_1"/>
<dbReference type="InParanoid" id="P33301"/>
<dbReference type="OMA" id="MWILRYQ"/>
<dbReference type="OrthoDB" id="3981072at2759"/>
<dbReference type="BioCyc" id="YEAST:G3O-29919-MONOMER"/>
<dbReference type="BioGRID-ORCS" id="851975">
    <property type="hits" value="0 hits in 10 CRISPR screens"/>
</dbReference>
<dbReference type="PRO" id="PR:P33301"/>
<dbReference type="Proteomes" id="UP000002311">
    <property type="component" value="Chromosome IV"/>
</dbReference>
<dbReference type="RNAct" id="P33301">
    <property type="molecule type" value="protein"/>
</dbReference>
<dbReference type="GO" id="GO:0000781">
    <property type="term" value="C:chromosome, telomeric region"/>
    <property type="evidence" value="ECO:0007669"/>
    <property type="project" value="UniProtKB-SubCell"/>
</dbReference>
<dbReference type="GO" id="GO:0030870">
    <property type="term" value="C:Mre11 complex"/>
    <property type="evidence" value="ECO:0000353"/>
    <property type="project" value="ComplexPortal"/>
</dbReference>
<dbReference type="GO" id="GO:0005654">
    <property type="term" value="C:nucleoplasm"/>
    <property type="evidence" value="ECO:0000304"/>
    <property type="project" value="Reactome"/>
</dbReference>
<dbReference type="GO" id="GO:0005634">
    <property type="term" value="C:nucleus"/>
    <property type="evidence" value="ECO:0000314"/>
    <property type="project" value="ComplexPortal"/>
</dbReference>
<dbReference type="GO" id="GO:0003677">
    <property type="term" value="F:DNA binding"/>
    <property type="evidence" value="ECO:0000314"/>
    <property type="project" value="SGD"/>
</dbReference>
<dbReference type="GO" id="GO:0003691">
    <property type="term" value="F:double-stranded telomeric DNA binding"/>
    <property type="evidence" value="ECO:0000314"/>
    <property type="project" value="SGD"/>
</dbReference>
<dbReference type="GO" id="GO:0051880">
    <property type="term" value="F:G-quadruplex DNA binding"/>
    <property type="evidence" value="ECO:0000314"/>
    <property type="project" value="SGD"/>
</dbReference>
<dbReference type="GO" id="GO:0030674">
    <property type="term" value="F:protein-macromolecule adaptor activity"/>
    <property type="evidence" value="ECO:0000314"/>
    <property type="project" value="SGD"/>
</dbReference>
<dbReference type="GO" id="GO:0043047">
    <property type="term" value="F:single-stranded telomeric DNA binding"/>
    <property type="evidence" value="ECO:0000314"/>
    <property type="project" value="SGD"/>
</dbReference>
<dbReference type="GO" id="GO:0042162">
    <property type="term" value="F:telomeric DNA binding"/>
    <property type="evidence" value="ECO:0000314"/>
    <property type="project" value="SGD"/>
</dbReference>
<dbReference type="GO" id="GO:0006284">
    <property type="term" value="P:base-excision repair"/>
    <property type="evidence" value="ECO:0000315"/>
    <property type="project" value="SGD"/>
</dbReference>
<dbReference type="GO" id="GO:0006302">
    <property type="term" value="P:double-strand break repair"/>
    <property type="evidence" value="ECO:0000303"/>
    <property type="project" value="ComplexPortal"/>
</dbReference>
<dbReference type="GO" id="GO:0006303">
    <property type="term" value="P:double-strand break repair via nonhomologous end joining"/>
    <property type="evidence" value="ECO:0000315"/>
    <property type="project" value="CACAO"/>
</dbReference>
<dbReference type="GO" id="GO:0035753">
    <property type="term" value="P:maintenance of DNA trinucleotide repeats"/>
    <property type="evidence" value="ECO:0000315"/>
    <property type="project" value="SGD"/>
</dbReference>
<dbReference type="GO" id="GO:0042138">
    <property type="term" value="P:meiotic DNA double-strand break formation"/>
    <property type="evidence" value="ECO:0000315"/>
    <property type="project" value="SGD"/>
</dbReference>
<dbReference type="GO" id="GO:0097552">
    <property type="term" value="P:mitochondrial double-strand break repair via homologous recombination"/>
    <property type="evidence" value="ECO:0000315"/>
    <property type="project" value="SGD"/>
</dbReference>
<dbReference type="GO" id="GO:0062176">
    <property type="term" value="P:R-loop processing"/>
    <property type="evidence" value="ECO:0000314"/>
    <property type="project" value="UniProtKB"/>
</dbReference>
<dbReference type="GO" id="GO:0030435">
    <property type="term" value="P:sporulation resulting in formation of a cellular spore"/>
    <property type="evidence" value="ECO:0000315"/>
    <property type="project" value="SGD"/>
</dbReference>
<dbReference type="GO" id="GO:0000723">
    <property type="term" value="P:telomere maintenance"/>
    <property type="evidence" value="ECO:0000315"/>
    <property type="project" value="SGD"/>
</dbReference>
<dbReference type="Gene3D" id="2.60.200.20">
    <property type="match status" value="1"/>
</dbReference>
<dbReference type="InterPro" id="IPR000253">
    <property type="entry name" value="FHA_dom"/>
</dbReference>
<dbReference type="InterPro" id="IPR008984">
    <property type="entry name" value="SMAD_FHA_dom_sf"/>
</dbReference>
<dbReference type="Pfam" id="PF00498">
    <property type="entry name" value="FHA"/>
    <property type="match status" value="1"/>
</dbReference>
<dbReference type="SUPFAM" id="SSF49879">
    <property type="entry name" value="SMAD/FHA domain"/>
    <property type="match status" value="1"/>
</dbReference>
<gene>
    <name evidence="11 12" type="primary">XRS2</name>
    <name type="ordered locus">YDR369C</name>
    <name type="ORF">D9481.13</name>
</gene>
<evidence type="ECO:0000250" key="1">
    <source>
        <dbReference type="UniProtKB" id="O43070"/>
    </source>
</evidence>
<evidence type="ECO:0000250" key="2">
    <source>
        <dbReference type="UniProtKB" id="O60934"/>
    </source>
</evidence>
<evidence type="ECO:0000255" key="3">
    <source>
        <dbReference type="PROSITE-ProRule" id="PRU00086"/>
    </source>
</evidence>
<evidence type="ECO:0000256" key="4">
    <source>
        <dbReference type="SAM" id="MobiDB-lite"/>
    </source>
</evidence>
<evidence type="ECO:0000269" key="5">
    <source>
    </source>
</evidence>
<evidence type="ECO:0000269" key="6">
    <source>
    </source>
</evidence>
<evidence type="ECO:0000269" key="7">
    <source>
    </source>
</evidence>
<evidence type="ECO:0000269" key="8">
    <source>
    </source>
</evidence>
<evidence type="ECO:0000269" key="9">
    <source>
    </source>
</evidence>
<evidence type="ECO:0000269" key="10">
    <source>
    </source>
</evidence>
<evidence type="ECO:0000303" key="11">
    <source>
    </source>
</evidence>
<evidence type="ECO:0000312" key="12">
    <source>
        <dbReference type="SGD" id="S000002777"/>
    </source>
</evidence>
<evidence type="ECO:0007744" key="13">
    <source>
    </source>
</evidence>
<evidence type="ECO:0007744" key="14">
    <source>
    </source>
</evidence>
<comment type="function">
    <text evidence="2 5 7 8 9">Component of the MRN complex, which plays a central role in double-strand break (DSB) repair, DNA recombination, maintenance of telomere integrity and meiosis (PubMed:14522986, PubMed:1468624, PubMed:35501303). The MRN complex is involved in the repair of DNA double-strand breaks (DSBs) via homologous recombination (HR), an error-free mechanism which primarily occurs during S and G2 phases (PubMed:35501303). The complex (1) mediates the end resection of damaged DNA, which generates proper single-stranded DNA, a key initial steps in HR, and is (2) required for the recruitment of other repair factors and efficient activation of ATM and ATR upon DNA damage (By similarity). The MRN complex possesses single-strand endonuclease activity and double-strand-specific 3'-5' exonuclease activity, which are provided by MRE11, to initiate end resection, which is required for single-strand invasion and recombination (By similarity). Within the MRN complex, XRS2 acts as a protein-protein adapter (PubMed:14522986). Specifically recognizes and binds phosphorylated proteins, promoting their recruitment to DNA damage sites (By similarity). Recruits MRE11 and RAD50 components of the MRN complex to DNA damage sites in response to DNA damage (PubMed:14522986). The MRN complex is also required for the processing of R-loops (PubMed:31537797).</text>
</comment>
<comment type="subunit">
    <text evidence="9 10">Component of the MRN complex composed of two heterodimers RAD50 and MRE11 associated with a single XRS2 (PubMed:35501303, PubMed:9845372). The MRN complexes dimerize on DNA to form joined MRN-MRN oligomers required for DNA double-strand break repair (PubMed:35501303).</text>
</comment>
<comment type="interaction">
    <interactant intactId="EBI-20599">
        <id>P33301</id>
    </interactant>
    <interactant intactId="EBI-11255">
        <id>P32829</id>
        <label>MRE11</label>
    </interactant>
    <organismsDiffer>false</organismsDiffer>
    <experiments>20</experiments>
</comment>
<comment type="interaction">
    <interactant intactId="EBI-20599">
        <id>P33301</id>
    </interactant>
    <interactant intactId="EBI-16440">
        <id>P46946</id>
        <label>SAE2</label>
    </interactant>
    <organismsDiffer>false</organismsDiffer>
    <experiments>3</experiments>
</comment>
<comment type="subcellular location">
    <subcellularLocation>
        <location evidence="10">Nucleus</location>
    </subcellularLocation>
    <subcellularLocation>
        <location evidence="1">Chromosome</location>
    </subcellularLocation>
    <subcellularLocation>
        <location evidence="1">Chromosome</location>
        <location evidence="1">Telomere</location>
    </subcellularLocation>
    <text evidence="1">Localizes to DNA double-strand breaks (DSBs); recruited to DNA damage sites.</text>
</comment>
<comment type="miscellaneous">
    <text evidence="6">Present with 358 molecules/cell in log phase SD medium.</text>
</comment>
<reference key="1">
    <citation type="journal article" date="1994" name="Mol. Cell. Biol.">
        <title>Mutations in XRS2 and RAD50 delay but do not prevent mating-type switching in Saccharomyces cerevisiae.</title>
        <authorList>
            <person name="Ivanov E.L."/>
            <person name="Sugawara N."/>
            <person name="White C.I."/>
            <person name="Fabre F."/>
            <person name="Haber J.E."/>
        </authorList>
    </citation>
    <scope>NUCLEOTIDE SEQUENCE [GENOMIC DNA]</scope>
    <source>
        <strain>EI303</strain>
    </source>
</reference>
<reference key="2">
    <citation type="journal article" date="1997" name="Nature">
        <title>The nucleotide sequence of Saccharomyces cerevisiae chromosome IV.</title>
        <authorList>
            <person name="Jacq C."/>
            <person name="Alt-Moerbe J."/>
            <person name="Andre B."/>
            <person name="Arnold W."/>
            <person name="Bahr A."/>
            <person name="Ballesta J.P.G."/>
            <person name="Bargues M."/>
            <person name="Baron L."/>
            <person name="Becker A."/>
            <person name="Biteau N."/>
            <person name="Bloecker H."/>
            <person name="Blugeon C."/>
            <person name="Boskovic J."/>
            <person name="Brandt P."/>
            <person name="Brueckner M."/>
            <person name="Buitrago M.J."/>
            <person name="Coster F."/>
            <person name="Delaveau T."/>
            <person name="del Rey F."/>
            <person name="Dujon B."/>
            <person name="Eide L.G."/>
            <person name="Garcia-Cantalejo J.M."/>
            <person name="Goffeau A."/>
            <person name="Gomez-Peris A."/>
            <person name="Granotier C."/>
            <person name="Hanemann V."/>
            <person name="Hankeln T."/>
            <person name="Hoheisel J.D."/>
            <person name="Jaeger W."/>
            <person name="Jimenez A."/>
            <person name="Jonniaux J.-L."/>
            <person name="Kraemer C."/>
            <person name="Kuester H."/>
            <person name="Laamanen P."/>
            <person name="Legros Y."/>
            <person name="Louis E.J."/>
            <person name="Moeller-Rieker S."/>
            <person name="Monnet A."/>
            <person name="Moro M."/>
            <person name="Mueller-Auer S."/>
            <person name="Nussbaumer B."/>
            <person name="Paricio N."/>
            <person name="Paulin L."/>
            <person name="Perea J."/>
            <person name="Perez-Alonso M."/>
            <person name="Perez-Ortin J.E."/>
            <person name="Pohl T.M."/>
            <person name="Prydz H."/>
            <person name="Purnelle B."/>
            <person name="Rasmussen S.W."/>
            <person name="Remacha M.A."/>
            <person name="Revuelta J.L."/>
            <person name="Rieger M."/>
            <person name="Salom D."/>
            <person name="Saluz H.P."/>
            <person name="Saiz J.E."/>
            <person name="Saren A.-M."/>
            <person name="Schaefer M."/>
            <person name="Scharfe M."/>
            <person name="Schmidt E.R."/>
            <person name="Schneider C."/>
            <person name="Scholler P."/>
            <person name="Schwarz S."/>
            <person name="Soler-Mira A."/>
            <person name="Urrestarazu L.A."/>
            <person name="Verhasselt P."/>
            <person name="Vissers S."/>
            <person name="Voet M."/>
            <person name="Volckaert G."/>
            <person name="Wagner G."/>
            <person name="Wambutt R."/>
            <person name="Wedler E."/>
            <person name="Wedler H."/>
            <person name="Woelfl S."/>
            <person name="Harris D.E."/>
            <person name="Bowman S."/>
            <person name="Brown D."/>
            <person name="Churcher C.M."/>
            <person name="Connor R."/>
            <person name="Dedman K."/>
            <person name="Gentles S."/>
            <person name="Hamlin N."/>
            <person name="Hunt S."/>
            <person name="Jones L."/>
            <person name="McDonald S."/>
            <person name="Murphy L.D."/>
            <person name="Niblett D."/>
            <person name="Odell C."/>
            <person name="Oliver K."/>
            <person name="Rajandream M.A."/>
            <person name="Richards C."/>
            <person name="Shore L."/>
            <person name="Walsh S.V."/>
            <person name="Barrell B.G."/>
            <person name="Dietrich F.S."/>
            <person name="Mulligan J.T."/>
            <person name="Allen E."/>
            <person name="Araujo R."/>
            <person name="Aviles E."/>
            <person name="Berno A."/>
            <person name="Carpenter J."/>
            <person name="Chen E."/>
            <person name="Cherry J.M."/>
            <person name="Chung E."/>
            <person name="Duncan M."/>
            <person name="Hunicke-Smith S."/>
            <person name="Hyman R.W."/>
            <person name="Komp C."/>
            <person name="Lashkari D."/>
            <person name="Lew H."/>
            <person name="Lin D."/>
            <person name="Mosedale D."/>
            <person name="Nakahara K."/>
            <person name="Namath A."/>
            <person name="Oefner P."/>
            <person name="Oh C."/>
            <person name="Petel F.X."/>
            <person name="Roberts D."/>
            <person name="Schramm S."/>
            <person name="Schroeder M."/>
            <person name="Shogren T."/>
            <person name="Shroff N."/>
            <person name="Winant A."/>
            <person name="Yelton M.A."/>
            <person name="Botstein D."/>
            <person name="Davis R.W."/>
            <person name="Johnston M."/>
            <person name="Andrews S."/>
            <person name="Brinkman R."/>
            <person name="Cooper J."/>
            <person name="Ding H."/>
            <person name="Du Z."/>
            <person name="Favello A."/>
            <person name="Fulton L."/>
            <person name="Gattung S."/>
            <person name="Greco T."/>
            <person name="Hallsworth K."/>
            <person name="Hawkins J."/>
            <person name="Hillier L.W."/>
            <person name="Jier M."/>
            <person name="Johnson D."/>
            <person name="Johnston L."/>
            <person name="Kirsten J."/>
            <person name="Kucaba T."/>
            <person name="Langston Y."/>
            <person name="Latreille P."/>
            <person name="Le T."/>
            <person name="Mardis E."/>
            <person name="Menezes S."/>
            <person name="Miller N."/>
            <person name="Nhan M."/>
            <person name="Pauley A."/>
            <person name="Peluso D."/>
            <person name="Rifkin L."/>
            <person name="Riles L."/>
            <person name="Taich A."/>
            <person name="Trevaskis E."/>
            <person name="Vignati D."/>
            <person name="Wilcox L."/>
            <person name="Wohldman P."/>
            <person name="Vaudin M."/>
            <person name="Wilson R."/>
            <person name="Waterston R."/>
            <person name="Albermann K."/>
            <person name="Hani J."/>
            <person name="Heumann K."/>
            <person name="Kleine K."/>
            <person name="Mewes H.-W."/>
            <person name="Zollner A."/>
            <person name="Zaccaria P."/>
        </authorList>
    </citation>
    <scope>NUCLEOTIDE SEQUENCE [LARGE SCALE GENOMIC DNA]</scope>
    <source>
        <strain>ATCC 204508 / S288c</strain>
    </source>
</reference>
<reference key="3">
    <citation type="journal article" date="2014" name="G3 (Bethesda)">
        <title>The reference genome sequence of Saccharomyces cerevisiae: Then and now.</title>
        <authorList>
            <person name="Engel S.R."/>
            <person name="Dietrich F.S."/>
            <person name="Fisk D.G."/>
            <person name="Binkley G."/>
            <person name="Balakrishnan R."/>
            <person name="Costanzo M.C."/>
            <person name="Dwight S.S."/>
            <person name="Hitz B.C."/>
            <person name="Karra K."/>
            <person name="Nash R.S."/>
            <person name="Weng S."/>
            <person name="Wong E.D."/>
            <person name="Lloyd P."/>
            <person name="Skrzypek M.S."/>
            <person name="Miyasato S.R."/>
            <person name="Simison M."/>
            <person name="Cherry J.M."/>
        </authorList>
    </citation>
    <scope>GENOME REANNOTATION</scope>
    <source>
        <strain>ATCC 204508 / S288c</strain>
    </source>
</reference>
<reference key="4">
    <citation type="submission" date="1995-12" db="EMBL/GenBank/DDBJ databases">
        <authorList>
            <person name="Miosga T."/>
            <person name="Juhnke H."/>
            <person name="Sterkel C."/>
            <person name="Zimmermann F.K."/>
        </authorList>
    </citation>
    <scope>NUCLEOTIDE SEQUENCE [GENOMIC DNA] OF 509-854</scope>
    <source>
        <strain>M5</strain>
    </source>
</reference>
<reference key="5">
    <citation type="journal article" date="1992" name="Genetics">
        <title>XRS2, a DNA repair gene of Saccharomyces cerevisiae, is needed for meiotic recombination.</title>
        <authorList>
            <person name="Ivanov E.L."/>
            <person name="Korolev V.G."/>
            <person name="Fabre F."/>
        </authorList>
    </citation>
    <scope>FUNCTION</scope>
</reference>
<reference key="6">
    <citation type="journal article" date="1998" name="Cell">
        <title>Complex formation and functional versatility of Mre11 of budding yeast in recombination.</title>
        <authorList>
            <person name="Usui T."/>
            <person name="Ohta T."/>
            <person name="Oshiumi H."/>
            <person name="Tomizawa J."/>
            <person name="Ogawa H."/>
            <person name="Ogawa T."/>
        </authorList>
    </citation>
    <scope>IDENTIFICATION IN THE MRE11 COMPLEX</scope>
    <scope>SUBCELLULAR LOCATION</scope>
</reference>
<reference key="7">
    <citation type="journal article" date="2003" name="J. Biol. Chem.">
        <title>Yeast xrs2 binds DNA and helps target rad50 and mre11 to DNA ends.</title>
        <authorList>
            <person name="Trujillo K.M."/>
            <person name="Roh D.H."/>
            <person name="Chen L."/>
            <person name="Van Komen S."/>
            <person name="Tomkinson A."/>
            <person name="Sung P."/>
        </authorList>
    </citation>
    <scope>FUNCTION</scope>
</reference>
<reference key="8">
    <citation type="journal article" date="2003" name="Nature">
        <title>Global analysis of protein expression in yeast.</title>
        <authorList>
            <person name="Ghaemmaghami S."/>
            <person name="Huh W.-K."/>
            <person name="Bower K."/>
            <person name="Howson R.W."/>
            <person name="Belle A."/>
            <person name="Dephoure N."/>
            <person name="O'Shea E.K."/>
            <person name="Weissman J.S."/>
        </authorList>
    </citation>
    <scope>LEVEL OF PROTEIN EXPRESSION [LARGE SCALE ANALYSIS]</scope>
</reference>
<reference key="9">
    <citation type="journal article" date="2008" name="Mol. Cell. Proteomics">
        <title>A multidimensional chromatography technology for in-depth phosphoproteome analysis.</title>
        <authorList>
            <person name="Albuquerque C.P."/>
            <person name="Smolka M.B."/>
            <person name="Payne S.H."/>
            <person name="Bafna V."/>
            <person name="Eng J."/>
            <person name="Zhou H."/>
        </authorList>
    </citation>
    <scope>PHOSPHORYLATION [LARGE SCALE ANALYSIS] AT SER-349; SER-533 AND SER-534</scope>
    <scope>IDENTIFICATION BY MASS SPECTROMETRY [LARGE SCALE ANALYSIS]</scope>
</reference>
<reference key="10">
    <citation type="journal article" date="2009" name="Science">
        <title>Global analysis of Cdk1 substrate phosphorylation sites provides insights into evolution.</title>
        <authorList>
            <person name="Holt L.J."/>
            <person name="Tuch B.B."/>
            <person name="Villen J."/>
            <person name="Johnson A.D."/>
            <person name="Gygi S.P."/>
            <person name="Morgan D.O."/>
        </authorList>
    </citation>
    <scope>PHOSPHORYLATION [LARGE SCALE ANALYSIS] AT SER-349; SER-553 AND THR-555</scope>
    <scope>IDENTIFICATION BY MASS SPECTROMETRY [LARGE SCALE ANALYSIS]</scope>
</reference>
<reference key="11">
    <citation type="journal article" date="2019" name="Nat. Commun.">
        <title>MRE11-RAD50-NBS1 promotes Fanconi Anemia R-loop suppression at transcription-replication conflicts.</title>
        <authorList>
            <person name="Chang E.Y."/>
            <person name="Tsai S."/>
            <person name="Aristizabal M.J."/>
            <person name="Wells J.P."/>
            <person name="Coulombe Y."/>
            <person name="Busatto F.F."/>
            <person name="Chan Y.A."/>
            <person name="Kumar A."/>
            <person name="Dan Zhu Y."/>
            <person name="Wang A.Y."/>
            <person name="Fournier L.A."/>
            <person name="Hieter P."/>
            <person name="Kobor M.S."/>
            <person name="Masson J.Y."/>
            <person name="Stirling P.C."/>
        </authorList>
    </citation>
    <scope>FUNCTION</scope>
</reference>
<reference key="12">
    <citation type="journal article" date="2022" name="Nat. Commun.">
        <title>Mre11-Rad50 oligomerization promotes DNA double-strand break repair.</title>
        <authorList>
            <person name="Kissling V.M."/>
            <person name="Reginato G."/>
            <person name="Bianco E."/>
            <person name="Kasaciunaite K."/>
            <person name="Tilma J."/>
            <person name="Cereghetti G."/>
            <person name="Schindler N."/>
            <person name="Lee S.S."/>
            <person name="Guerois R."/>
            <person name="Luke B."/>
            <person name="Seidel R."/>
            <person name="Cejka P."/>
            <person name="Peter M."/>
        </authorList>
    </citation>
    <scope>IDENTIFICATION IN THE MRE11 COMPLEX</scope>
    <scope>FUNCTION</scope>
    <scope>SUBUNIT</scope>
</reference>
<name>XRS2_YEAST</name>
<proteinExistence type="evidence at protein level"/>
<protein>
    <recommendedName>
        <fullName>DNA repair protein XRS2</fullName>
    </recommendedName>
</protein>
<feature type="chain" id="PRO_0000066050" description="DNA repair protein XRS2">
    <location>
        <begin position="1"/>
        <end position="854"/>
    </location>
</feature>
<feature type="domain" description="FHA" evidence="3">
    <location>
        <begin position="28"/>
        <end position="50"/>
    </location>
</feature>
<feature type="region of interest" description="Disordered" evidence="4">
    <location>
        <begin position="429"/>
        <end position="455"/>
    </location>
</feature>
<feature type="region of interest" description="Disordered" evidence="4">
    <location>
        <begin position="807"/>
        <end position="854"/>
    </location>
</feature>
<feature type="compositionally biased region" description="Polar residues" evidence="4">
    <location>
        <begin position="444"/>
        <end position="455"/>
    </location>
</feature>
<feature type="compositionally biased region" description="Low complexity" evidence="4">
    <location>
        <begin position="820"/>
        <end position="832"/>
    </location>
</feature>
<feature type="modified residue" description="Phosphoserine" evidence="13 14">
    <location>
        <position position="349"/>
    </location>
</feature>
<feature type="modified residue" description="Phosphoserine" evidence="13">
    <location>
        <position position="533"/>
    </location>
</feature>
<feature type="modified residue" description="Phosphoserine" evidence="13">
    <location>
        <position position="534"/>
    </location>
</feature>
<feature type="modified residue" description="Phosphoserine" evidence="14">
    <location>
        <position position="553"/>
    </location>
</feature>
<feature type="modified residue" description="Phosphothreonine" evidence="14">
    <location>
        <position position="555"/>
    </location>
</feature>
<organism>
    <name type="scientific">Saccharomyces cerevisiae (strain ATCC 204508 / S288c)</name>
    <name type="common">Baker's yeast</name>
    <dbReference type="NCBI Taxonomy" id="559292"/>
    <lineage>
        <taxon>Eukaryota</taxon>
        <taxon>Fungi</taxon>
        <taxon>Dikarya</taxon>
        <taxon>Ascomycota</taxon>
        <taxon>Saccharomycotina</taxon>
        <taxon>Saccharomycetes</taxon>
        <taxon>Saccharomycetales</taxon>
        <taxon>Saccharomycetaceae</taxon>
        <taxon>Saccharomyces</taxon>
    </lineage>
</organism>
<keyword id="KW-0158">Chromosome</keyword>
<keyword id="KW-0227">DNA damage</keyword>
<keyword id="KW-0234">DNA repair</keyword>
<keyword id="KW-0469">Meiosis</keyword>
<keyword id="KW-0539">Nucleus</keyword>
<keyword id="KW-0597">Phosphoprotein</keyword>
<keyword id="KW-1185">Reference proteome</keyword>
<keyword id="KW-0779">Telomere</keyword>
<sequence>MWVVRYQNTLEDGSISFISCCLQAFKTYSIGRSSKNPLIIKNDKSISRQHITFKWEINNSSDLKHSSLCLVNKGKLTSLNKKFMKVGETFTINASDVLKSTIIELGTTPIRIEFEWINEVWNIPPHLTQFRTMLSEYGISTEISINDIPANLMISDYPKSEDNSIRELYALVSTIPMKKSRFLMELCNTLLPTSKTNLKFDEMWNDMISNPEYNVFDFDPNILLSKFMRLNNIRVLTTIKSEPRLSSLLRTFNINLFAFDNIDSLYKYVDSLEASTEYLILTTTDKKENGKILCTIKTMLTSIIDGTLSAVINMKGASSRTLDNGKFDQISEGMSTILKTSRAPEVEASPVVSKKRKLNRRRVLPLDSLDFFAGGLSTKTLSENRSLTDAKRLNCGAESKTVISSPNIAEADEKHAPFLQNALKPTEDIGKKSGHSSPGAIIVSSPNLGTVNTSEDSLDKSLQSHKLPQPSLPEVAGIGSQTISSNSADYETAAVNSMDDAEVTKNFRVNHHQNIEQPSKNIRKLSNYSREISSPLQENCKSPVKELSIKEKSGTPHAFVEAIQETKNREVKRVKSTIVELKDEELSEEAINQLKNLAIVEPSNNLLRKSFDSEGNKTSRTTEKWENSLMEPEWHKRKNFKTFVKVRPKSKAHKEEGKNNTQSSDFIRNAAFLITRNYVPLKKYSKKDTTTKWGTEENEDMFALTEMERFGSNTFMSDNINSNTIQKRSQALNRFTNEDSSNEGEEDSFSFSRCSGTAASVQPLKNKIFITDEDDLGDIDDKSDRLNHRENNRNLFVVKEMNLRPNLSEECSKQSRHSRSATSRSRGSFGASNNGDGDDDDDDGPKFTFKRRKG</sequence>